<sequence length="433" mass="48493">MSEKKPHLNLVVIGHIDHGKSTLMGRLLYEIGAVDPRLIQQYEEEAKKMGRETWKYAWVLDKLKEEREKGITIDLGFYKFETKKYFFTLIDAPGHRDFVKNMITGASQADVALLVVSAKEGEFEAGISPAGQTREHVFLAKTMGVDQLVVAINKMDTVNYSKERYEEIKNQLIRLLRMVGYKVDEIPFIPTSAWEGVNVSKRTPEKTPWYDGPCLYEAFDFFKEPPRPIDKPLRIPIQDVYSIKGVGTVPVGRVETGVLKVGDKIIINPPKAVGEVKSIETHHTPLQEAIPGDNIGFNVKGVEKSQLRRGDVAGHTTNPPTVAEEFTGRIFVLYHPTAIAAGYTPVLHIHTATVPVTFEELLQKLDPRTGSVAEEKPQYIKQGDSAIVRFKPRKPVVVEKYSEFPPLGRFAIRDSGRTIAAGVVIDVKKAEGY</sequence>
<accession>A1RXW9</accession>
<reference key="1">
    <citation type="journal article" date="2008" name="J. Bacteriol.">
        <title>Genome sequence of Thermofilum pendens reveals an exceptional loss of biosynthetic pathways without genome reduction.</title>
        <authorList>
            <person name="Anderson I."/>
            <person name="Rodriguez J."/>
            <person name="Susanti D."/>
            <person name="Porat I."/>
            <person name="Reich C."/>
            <person name="Ulrich L.E."/>
            <person name="Elkins J.G."/>
            <person name="Mavromatis K."/>
            <person name="Lykidis A."/>
            <person name="Kim E."/>
            <person name="Thompson L.S."/>
            <person name="Nolan M."/>
            <person name="Land M."/>
            <person name="Copeland A."/>
            <person name="Lapidus A."/>
            <person name="Lucas S."/>
            <person name="Detter C."/>
            <person name="Zhulin I.B."/>
            <person name="Olsen G.J."/>
            <person name="Whitman W."/>
            <person name="Mukhopadhyay B."/>
            <person name="Bristow J."/>
            <person name="Kyrpides N."/>
        </authorList>
    </citation>
    <scope>NUCLEOTIDE SEQUENCE [LARGE SCALE GENOMIC DNA]</scope>
    <source>
        <strain>DSM 2475 / Hrk 5</strain>
    </source>
</reference>
<protein>
    <recommendedName>
        <fullName evidence="2">Elongation factor 1-alpha</fullName>
        <shortName evidence="2">EF-1-alpha</shortName>
        <ecNumber evidence="2">3.6.5.3</ecNumber>
    </recommendedName>
    <alternativeName>
        <fullName evidence="2">Elongation factor Tu</fullName>
        <shortName evidence="2">EF-Tu</shortName>
    </alternativeName>
</protein>
<comment type="function">
    <text evidence="2">GTP hydrolase that promotes the GTP-dependent binding of aminoacyl-tRNA to the A-site of ribosomes during protein biosynthesis.</text>
</comment>
<comment type="catalytic activity">
    <reaction evidence="2">
        <text>GTP + H2O = GDP + phosphate + H(+)</text>
        <dbReference type="Rhea" id="RHEA:19669"/>
        <dbReference type="ChEBI" id="CHEBI:15377"/>
        <dbReference type="ChEBI" id="CHEBI:15378"/>
        <dbReference type="ChEBI" id="CHEBI:37565"/>
        <dbReference type="ChEBI" id="CHEBI:43474"/>
        <dbReference type="ChEBI" id="CHEBI:58189"/>
        <dbReference type="EC" id="3.6.5.3"/>
    </reaction>
    <physiologicalReaction direction="left-to-right" evidence="2">
        <dbReference type="Rhea" id="RHEA:19670"/>
    </physiologicalReaction>
</comment>
<comment type="subcellular location">
    <subcellularLocation>
        <location evidence="2">Cytoplasm</location>
    </subcellularLocation>
</comment>
<comment type="similarity">
    <text evidence="2">Belongs to the TRAFAC class translation factor GTPase superfamily. Classic translation factor GTPase family. EF-Tu/EF-1A subfamily.</text>
</comment>
<gene>
    <name evidence="2" type="primary">tuf</name>
    <name type="ordered locus">Tpen_0647</name>
</gene>
<proteinExistence type="inferred from homology"/>
<keyword id="KW-0963">Cytoplasm</keyword>
<keyword id="KW-0251">Elongation factor</keyword>
<keyword id="KW-0342">GTP-binding</keyword>
<keyword id="KW-0378">Hydrolase</keyword>
<keyword id="KW-0460">Magnesium</keyword>
<keyword id="KW-0479">Metal-binding</keyword>
<keyword id="KW-0547">Nucleotide-binding</keyword>
<keyword id="KW-0648">Protein biosynthesis</keyword>
<keyword id="KW-1185">Reference proteome</keyword>
<evidence type="ECO:0000250" key="1"/>
<evidence type="ECO:0000255" key="2">
    <source>
        <dbReference type="HAMAP-Rule" id="MF_00118"/>
    </source>
</evidence>
<name>EF1A_THEPD</name>
<feature type="chain" id="PRO_0000337612" description="Elongation factor 1-alpha">
    <location>
        <begin position="1"/>
        <end position="433"/>
    </location>
</feature>
<feature type="domain" description="tr-type G">
    <location>
        <begin position="5"/>
        <end position="227"/>
    </location>
</feature>
<feature type="region of interest" description="G1" evidence="1">
    <location>
        <begin position="14"/>
        <end position="21"/>
    </location>
</feature>
<feature type="region of interest" description="G2" evidence="1">
    <location>
        <begin position="70"/>
        <end position="74"/>
    </location>
</feature>
<feature type="region of interest" description="G3" evidence="1">
    <location>
        <begin position="91"/>
        <end position="94"/>
    </location>
</feature>
<feature type="region of interest" description="G4" evidence="1">
    <location>
        <begin position="153"/>
        <end position="156"/>
    </location>
</feature>
<feature type="region of interest" description="G5" evidence="1">
    <location>
        <begin position="192"/>
        <end position="194"/>
    </location>
</feature>
<feature type="binding site" evidence="2">
    <location>
        <begin position="14"/>
        <end position="21"/>
    </location>
    <ligand>
        <name>GTP</name>
        <dbReference type="ChEBI" id="CHEBI:37565"/>
    </ligand>
</feature>
<feature type="binding site" evidence="2">
    <location>
        <position position="21"/>
    </location>
    <ligand>
        <name>Mg(2+)</name>
        <dbReference type="ChEBI" id="CHEBI:18420"/>
    </ligand>
</feature>
<feature type="binding site" evidence="2">
    <location>
        <begin position="91"/>
        <end position="95"/>
    </location>
    <ligand>
        <name>GTP</name>
        <dbReference type="ChEBI" id="CHEBI:37565"/>
    </ligand>
</feature>
<feature type="binding site" evidence="2">
    <location>
        <begin position="153"/>
        <end position="156"/>
    </location>
    <ligand>
        <name>GTP</name>
        <dbReference type="ChEBI" id="CHEBI:37565"/>
    </ligand>
</feature>
<organism>
    <name type="scientific">Thermofilum pendens (strain DSM 2475 / Hrk 5)</name>
    <dbReference type="NCBI Taxonomy" id="368408"/>
    <lineage>
        <taxon>Archaea</taxon>
        <taxon>Thermoproteota</taxon>
        <taxon>Thermoprotei</taxon>
        <taxon>Thermofilales</taxon>
        <taxon>Thermofilaceae</taxon>
        <taxon>Thermofilum</taxon>
    </lineage>
</organism>
<dbReference type="EC" id="3.6.5.3" evidence="2"/>
<dbReference type="EMBL" id="CP000505">
    <property type="protein sequence ID" value="ABL78049.1"/>
    <property type="molecule type" value="Genomic_DNA"/>
</dbReference>
<dbReference type="RefSeq" id="WP_011752314.1">
    <property type="nucleotide sequence ID" value="NC_008698.1"/>
</dbReference>
<dbReference type="SMR" id="A1RXW9"/>
<dbReference type="STRING" id="368408.Tpen_0647"/>
<dbReference type="EnsemblBacteria" id="ABL78049">
    <property type="protein sequence ID" value="ABL78049"/>
    <property type="gene ID" value="Tpen_0647"/>
</dbReference>
<dbReference type="GeneID" id="4601513"/>
<dbReference type="KEGG" id="tpe:Tpen_0647"/>
<dbReference type="eggNOG" id="arCOG01561">
    <property type="taxonomic scope" value="Archaea"/>
</dbReference>
<dbReference type="HOGENOM" id="CLU_007265_3_5_2"/>
<dbReference type="OrthoDB" id="371718at2157"/>
<dbReference type="Proteomes" id="UP000000641">
    <property type="component" value="Chromosome"/>
</dbReference>
<dbReference type="GO" id="GO:0005737">
    <property type="term" value="C:cytoplasm"/>
    <property type="evidence" value="ECO:0007669"/>
    <property type="project" value="UniProtKB-SubCell"/>
</dbReference>
<dbReference type="GO" id="GO:0005525">
    <property type="term" value="F:GTP binding"/>
    <property type="evidence" value="ECO:0007669"/>
    <property type="project" value="UniProtKB-UniRule"/>
</dbReference>
<dbReference type="GO" id="GO:0003924">
    <property type="term" value="F:GTPase activity"/>
    <property type="evidence" value="ECO:0007669"/>
    <property type="project" value="InterPro"/>
</dbReference>
<dbReference type="GO" id="GO:0003746">
    <property type="term" value="F:translation elongation factor activity"/>
    <property type="evidence" value="ECO:0007669"/>
    <property type="project" value="UniProtKB-UniRule"/>
</dbReference>
<dbReference type="CDD" id="cd01883">
    <property type="entry name" value="EF1_alpha"/>
    <property type="match status" value="1"/>
</dbReference>
<dbReference type="CDD" id="cd03693">
    <property type="entry name" value="EF1_alpha_II"/>
    <property type="match status" value="1"/>
</dbReference>
<dbReference type="CDD" id="cd03705">
    <property type="entry name" value="EF1_alpha_III"/>
    <property type="match status" value="1"/>
</dbReference>
<dbReference type="FunFam" id="2.40.30.10:FF:000003">
    <property type="entry name" value="Elongation factor 1-alpha"/>
    <property type="match status" value="1"/>
</dbReference>
<dbReference type="FunFam" id="2.40.30.10:FF:000005">
    <property type="entry name" value="Elongation factor 1-alpha"/>
    <property type="match status" value="1"/>
</dbReference>
<dbReference type="FunFam" id="3.40.50.300:FF:000255">
    <property type="entry name" value="Elongation factor 1-alpha"/>
    <property type="match status" value="1"/>
</dbReference>
<dbReference type="Gene3D" id="3.40.50.300">
    <property type="entry name" value="P-loop containing nucleotide triphosphate hydrolases"/>
    <property type="match status" value="1"/>
</dbReference>
<dbReference type="Gene3D" id="2.40.30.10">
    <property type="entry name" value="Translation factors"/>
    <property type="match status" value="2"/>
</dbReference>
<dbReference type="HAMAP" id="MF_00118_A">
    <property type="entry name" value="EF_Tu_A"/>
    <property type="match status" value="1"/>
</dbReference>
<dbReference type="InterPro" id="IPR004161">
    <property type="entry name" value="EFTu-like_2"/>
</dbReference>
<dbReference type="InterPro" id="IPR031157">
    <property type="entry name" value="G_TR_CS"/>
</dbReference>
<dbReference type="InterPro" id="IPR054696">
    <property type="entry name" value="GTP-eEF1A_C"/>
</dbReference>
<dbReference type="InterPro" id="IPR027417">
    <property type="entry name" value="P-loop_NTPase"/>
</dbReference>
<dbReference type="InterPro" id="IPR005225">
    <property type="entry name" value="Small_GTP-bd"/>
</dbReference>
<dbReference type="InterPro" id="IPR000795">
    <property type="entry name" value="T_Tr_GTP-bd_dom"/>
</dbReference>
<dbReference type="InterPro" id="IPR050100">
    <property type="entry name" value="TRAFAC_GTPase_members"/>
</dbReference>
<dbReference type="InterPro" id="IPR009000">
    <property type="entry name" value="Transl_B-barrel_sf"/>
</dbReference>
<dbReference type="InterPro" id="IPR009001">
    <property type="entry name" value="Transl_elong_EF1A/Init_IF2_C"/>
</dbReference>
<dbReference type="InterPro" id="IPR004539">
    <property type="entry name" value="Transl_elong_EF1A_euk/arc"/>
</dbReference>
<dbReference type="NCBIfam" id="TIGR00483">
    <property type="entry name" value="EF-1_alpha"/>
    <property type="match status" value="1"/>
</dbReference>
<dbReference type="NCBIfam" id="NF008969">
    <property type="entry name" value="PRK12317.1"/>
    <property type="match status" value="1"/>
</dbReference>
<dbReference type="NCBIfam" id="TIGR00231">
    <property type="entry name" value="small_GTP"/>
    <property type="match status" value="1"/>
</dbReference>
<dbReference type="PANTHER" id="PTHR23115">
    <property type="entry name" value="TRANSLATION FACTOR"/>
    <property type="match status" value="1"/>
</dbReference>
<dbReference type="Pfam" id="PF22594">
    <property type="entry name" value="GTP-eEF1A_C"/>
    <property type="match status" value="1"/>
</dbReference>
<dbReference type="Pfam" id="PF00009">
    <property type="entry name" value="GTP_EFTU"/>
    <property type="match status" value="1"/>
</dbReference>
<dbReference type="Pfam" id="PF03144">
    <property type="entry name" value="GTP_EFTU_D2"/>
    <property type="match status" value="1"/>
</dbReference>
<dbReference type="PRINTS" id="PR00315">
    <property type="entry name" value="ELONGATNFCT"/>
</dbReference>
<dbReference type="SUPFAM" id="SSF50465">
    <property type="entry name" value="EF-Tu/eEF-1alpha/eIF2-gamma C-terminal domain"/>
    <property type="match status" value="1"/>
</dbReference>
<dbReference type="SUPFAM" id="SSF52540">
    <property type="entry name" value="P-loop containing nucleoside triphosphate hydrolases"/>
    <property type="match status" value="1"/>
</dbReference>
<dbReference type="SUPFAM" id="SSF50447">
    <property type="entry name" value="Translation proteins"/>
    <property type="match status" value="1"/>
</dbReference>
<dbReference type="PROSITE" id="PS00301">
    <property type="entry name" value="G_TR_1"/>
    <property type="match status" value="1"/>
</dbReference>
<dbReference type="PROSITE" id="PS51722">
    <property type="entry name" value="G_TR_2"/>
    <property type="match status" value="1"/>
</dbReference>